<gene>
    <name evidence="1" type="primary">clpS</name>
    <name type="ordered locus">NT01EI_2492</name>
</gene>
<evidence type="ECO:0000255" key="1">
    <source>
        <dbReference type="HAMAP-Rule" id="MF_00302"/>
    </source>
</evidence>
<comment type="function">
    <text evidence="1">Involved in the modulation of the specificity of the ClpAP-mediated ATP-dependent protein degradation.</text>
</comment>
<comment type="subunit">
    <text evidence="1">Binds to the N-terminal domain of the chaperone ClpA.</text>
</comment>
<comment type="similarity">
    <text evidence="1">Belongs to the ClpS family.</text>
</comment>
<name>CLPS_EDWI9</name>
<sequence length="106" mass="12121">MANLNDWLNLEPLAEDQTRRAVKPPSLYSVILNNDDYTPMEFVIEVLQTFFAYDIERATQLMLTVHYKGKAVCGVFTAEVAETKVALINRYARDNEHPLLCTLEKA</sequence>
<protein>
    <recommendedName>
        <fullName evidence="1">ATP-dependent Clp protease adapter protein ClpS</fullName>
    </recommendedName>
</protein>
<reference key="1">
    <citation type="submission" date="2009-03" db="EMBL/GenBank/DDBJ databases">
        <title>Complete genome sequence of Edwardsiella ictaluri 93-146.</title>
        <authorList>
            <person name="Williams M.L."/>
            <person name="Gillaspy A.F."/>
            <person name="Dyer D.W."/>
            <person name="Thune R.L."/>
            <person name="Waldbieser G.C."/>
            <person name="Schuster S.C."/>
            <person name="Gipson J."/>
            <person name="Zaitshik J."/>
            <person name="Landry C."/>
            <person name="Lawrence M.L."/>
        </authorList>
    </citation>
    <scope>NUCLEOTIDE SEQUENCE [LARGE SCALE GENOMIC DNA]</scope>
    <source>
        <strain>93-146</strain>
    </source>
</reference>
<feature type="chain" id="PRO_1000204973" description="ATP-dependent Clp protease adapter protein ClpS">
    <location>
        <begin position="1"/>
        <end position="106"/>
    </location>
</feature>
<organism>
    <name type="scientific">Edwardsiella ictaluri (strain 93-146)</name>
    <dbReference type="NCBI Taxonomy" id="634503"/>
    <lineage>
        <taxon>Bacteria</taxon>
        <taxon>Pseudomonadati</taxon>
        <taxon>Pseudomonadota</taxon>
        <taxon>Gammaproteobacteria</taxon>
        <taxon>Enterobacterales</taxon>
        <taxon>Hafniaceae</taxon>
        <taxon>Edwardsiella</taxon>
    </lineage>
</organism>
<accession>C5BEA1</accession>
<dbReference type="EMBL" id="CP001600">
    <property type="protein sequence ID" value="ACR69662.1"/>
    <property type="molecule type" value="Genomic_DNA"/>
</dbReference>
<dbReference type="RefSeq" id="WP_015871774.1">
    <property type="nucleotide sequence ID" value="NZ_CP169062.1"/>
</dbReference>
<dbReference type="SMR" id="C5BEA1"/>
<dbReference type="STRING" id="67780.B6E78_04585"/>
<dbReference type="GeneID" id="69539407"/>
<dbReference type="KEGG" id="eic:NT01EI_2492"/>
<dbReference type="PATRIC" id="fig|634503.3.peg.2215"/>
<dbReference type="HOGENOM" id="CLU_134358_2_1_6"/>
<dbReference type="OrthoDB" id="9796121at2"/>
<dbReference type="Proteomes" id="UP000001485">
    <property type="component" value="Chromosome"/>
</dbReference>
<dbReference type="GO" id="GO:0030163">
    <property type="term" value="P:protein catabolic process"/>
    <property type="evidence" value="ECO:0007669"/>
    <property type="project" value="InterPro"/>
</dbReference>
<dbReference type="GO" id="GO:0006508">
    <property type="term" value="P:proteolysis"/>
    <property type="evidence" value="ECO:0007669"/>
    <property type="project" value="UniProtKB-UniRule"/>
</dbReference>
<dbReference type="FunFam" id="3.30.1390.10:FF:000002">
    <property type="entry name" value="ATP-dependent Clp protease adapter protein ClpS"/>
    <property type="match status" value="1"/>
</dbReference>
<dbReference type="Gene3D" id="3.30.1390.10">
    <property type="match status" value="1"/>
</dbReference>
<dbReference type="HAMAP" id="MF_00302">
    <property type="entry name" value="ClpS"/>
    <property type="match status" value="1"/>
</dbReference>
<dbReference type="InterPro" id="IPR022935">
    <property type="entry name" value="ClpS"/>
</dbReference>
<dbReference type="InterPro" id="IPR003769">
    <property type="entry name" value="ClpS_core"/>
</dbReference>
<dbReference type="InterPro" id="IPR014719">
    <property type="entry name" value="Ribosomal_bL12_C/ClpS-like"/>
</dbReference>
<dbReference type="NCBIfam" id="NF000670">
    <property type="entry name" value="PRK00033.1-3"/>
    <property type="match status" value="1"/>
</dbReference>
<dbReference type="NCBIfam" id="NF000672">
    <property type="entry name" value="PRK00033.1-5"/>
    <property type="match status" value="1"/>
</dbReference>
<dbReference type="PANTHER" id="PTHR33473:SF19">
    <property type="entry name" value="ATP-DEPENDENT CLP PROTEASE ADAPTER PROTEIN CLPS"/>
    <property type="match status" value="1"/>
</dbReference>
<dbReference type="PANTHER" id="PTHR33473">
    <property type="entry name" value="ATP-DEPENDENT CLP PROTEASE ADAPTER PROTEIN CLPS1, CHLOROPLASTIC"/>
    <property type="match status" value="1"/>
</dbReference>
<dbReference type="Pfam" id="PF02617">
    <property type="entry name" value="ClpS"/>
    <property type="match status" value="1"/>
</dbReference>
<dbReference type="SUPFAM" id="SSF54736">
    <property type="entry name" value="ClpS-like"/>
    <property type="match status" value="1"/>
</dbReference>
<proteinExistence type="inferred from homology"/>